<reference key="1">
    <citation type="journal article" date="1991" name="Virology">
        <title>A highly divergent proviral DNA clone of SIV from a distinct species of African green monkey.</title>
        <authorList>
            <person name="Fomsgaard A."/>
            <person name="Hirsch V.M."/>
            <person name="Allan J.S."/>
            <person name="Johnson P.R."/>
        </authorList>
    </citation>
    <scope>NUCLEOTIDE SEQUENCE [GENOMIC DNA]</scope>
</reference>
<dbReference type="EMBL" id="M66437">
    <property type="protein sequence ID" value="AAA91926.3"/>
    <property type="molecule type" value="Genomic_DNA"/>
</dbReference>
<dbReference type="EMBL" id="M58410">
    <property type="status" value="NOT_ANNOTATED_CDS"/>
    <property type="molecule type" value="Genomic_RNA"/>
</dbReference>
<dbReference type="Proteomes" id="UP000201112">
    <property type="component" value="Segment"/>
</dbReference>
<dbReference type="Proteomes" id="UP000257419">
    <property type="component" value="Segment"/>
</dbReference>
<dbReference type="GO" id="GO:0044196">
    <property type="term" value="C:host cell nucleolus"/>
    <property type="evidence" value="ECO:0007669"/>
    <property type="project" value="UniProtKB-SubCell"/>
</dbReference>
<dbReference type="GO" id="GO:0003723">
    <property type="term" value="F:RNA binding"/>
    <property type="evidence" value="ECO:0007669"/>
    <property type="project" value="UniProtKB-KW"/>
</dbReference>
<dbReference type="GO" id="GO:0001070">
    <property type="term" value="F:RNA-binding transcription regulator activity"/>
    <property type="evidence" value="ECO:0007669"/>
    <property type="project" value="InterPro"/>
</dbReference>
<dbReference type="GO" id="GO:0050434">
    <property type="term" value="P:positive regulation of viral transcription"/>
    <property type="evidence" value="ECO:0007669"/>
    <property type="project" value="InterPro"/>
</dbReference>
<dbReference type="Gene3D" id="4.10.20.10">
    <property type="entry name" value="Tat domain"/>
    <property type="match status" value="1"/>
</dbReference>
<dbReference type="InterPro" id="IPR001831">
    <property type="entry name" value="IV_Tat"/>
</dbReference>
<dbReference type="InterPro" id="IPR036963">
    <property type="entry name" value="Tat_dom_sf"/>
</dbReference>
<dbReference type="Pfam" id="PF00539">
    <property type="entry name" value="Tat"/>
    <property type="match status" value="1"/>
</dbReference>
<dbReference type="PRINTS" id="PR00055">
    <property type="entry name" value="HIVTATDOMAIN"/>
</dbReference>
<proteinExistence type="inferred from homology"/>
<accession>Q02838</accession>
<evidence type="ECO:0000250" key="1"/>
<evidence type="ECO:0000250" key="2">
    <source>
        <dbReference type="UniProtKB" id="P04608"/>
    </source>
</evidence>
<evidence type="ECO:0000255" key="3"/>
<evidence type="ECO:0000256" key="4">
    <source>
        <dbReference type="SAM" id="MobiDB-lite"/>
    </source>
</evidence>
<evidence type="ECO:0000305" key="5"/>
<protein>
    <recommendedName>
        <fullName>Protein Tat</fullName>
    </recommendedName>
    <alternativeName>
        <fullName>Transactivating regulatory protein</fullName>
    </alternativeName>
</protein>
<gene>
    <name type="primary">tat</name>
</gene>
<organism>
    <name type="scientific">Simian immunodeficiency virus agm.grivet (isolate AGM gr-1)</name>
    <name type="common">SIV-agm.gri</name>
    <name type="synonym">Simian immunodeficiency virus African green monkey grivet</name>
    <dbReference type="NCBI Taxonomy" id="31684"/>
    <lineage>
        <taxon>Viruses</taxon>
        <taxon>Riboviria</taxon>
        <taxon>Pararnavirae</taxon>
        <taxon>Artverviricota</taxon>
        <taxon>Revtraviricetes</taxon>
        <taxon>Ortervirales</taxon>
        <taxon>Retroviridae</taxon>
        <taxon>Orthoretrovirinae</taxon>
        <taxon>Lentivirus</taxon>
        <taxon>Simian immunodeficiency virus</taxon>
    </lineage>
</organism>
<feature type="chain" id="PRO_0000085378" description="Protein Tat">
    <location>
        <begin position="1"/>
        <end position="94"/>
    </location>
</feature>
<feature type="region of interest" description="Cysteine-rich" evidence="1">
    <location>
        <begin position="21"/>
        <end position="37"/>
    </location>
</feature>
<feature type="region of interest" description="Core" evidence="1">
    <location>
        <begin position="38"/>
        <end position="48"/>
    </location>
</feature>
<feature type="region of interest" description="Disordered" evidence="4">
    <location>
        <begin position="51"/>
        <end position="94"/>
    </location>
</feature>
<feature type="short sequence motif" description="Nuclear localization signal, and RNA-binding (TAR)" evidence="3">
    <location>
        <begin position="49"/>
        <end position="55"/>
    </location>
</feature>
<feature type="compositionally biased region" description="Polar residues" evidence="4">
    <location>
        <begin position="58"/>
        <end position="80"/>
    </location>
</feature>
<feature type="compositionally biased region" description="Basic and acidic residues" evidence="4">
    <location>
        <begin position="81"/>
        <end position="94"/>
    </location>
</feature>
<keyword id="KW-0010">Activator</keyword>
<keyword id="KW-1048">Host nucleus</keyword>
<keyword id="KW-0945">Host-virus interaction</keyword>
<keyword id="KW-0694">RNA-binding</keyword>
<keyword id="KW-0804">Transcription</keyword>
<keyword id="KW-0805">Transcription regulation</keyword>
<sequence length="94" mass="10875">MDKEEEPHPLLQDLHRPLQPCTNKCYCKKCCYHCELCFLQKGLGVRYHVSRKRRKTSTQDNQDPIRQQSISTVQRNGQTTEEGKTEVEKAAAAN</sequence>
<name>TAT_SIVG1</name>
<comment type="function">
    <text evidence="2">Transcriptional activator that increases RNA Pol II processivity, thereby increasing the level of full-length viral transcripts. Recognizes a hairpin structure at the 5'-LTR of the nascent viral mRNAs referred to as the transactivation responsive RNA element (TAR) and recruits the cyclin T1-CDK9 complex (P-TEFb complex) that will in turn hyperphosphorylate the RNA polymerase II to allow efficient elongation. The CDK9 component of P-TEFb and other Tat-activated kinases hyperphosphorylate the C-terminus of RNA Pol II that becomes stabilized and much more processive.</text>
</comment>
<comment type="function">
    <text evidence="1">Extracellular circulating Tat can be endocytosed by surrounding uninfected cells via the binding to several surface receptors. Endosomal low pH allows Tat to cross the endosome membrane to enter the cytosol and eventually further translocate into the nucleus, thereby inducing severe cell dysfunctions ranging from cell activation to cell death. Through (By similarity).</text>
</comment>
<comment type="subunit">
    <text evidence="1">Interacts with host CCNT1. Associates with the P-TEFb complex composed at least of Tat, P-TEFb (CDK9 and CCNT1), TAR RNA, RNA Pol II. Interacts with CCNT2; the resulting complex is unable to bind to TAR RNA (By similarity).</text>
</comment>
<comment type="subcellular location">
    <subcellularLocation>
        <location evidence="1">Host nucleus</location>
        <location evidence="1">Host nucleolus</location>
    </subcellularLocation>
</comment>
<comment type="similarity">
    <text evidence="5">Belongs to the lentiviruses Tat family.</text>
</comment>
<organismHost>
    <name type="scientific">Cercopithecidae</name>
    <name type="common">Old World monkeys</name>
    <dbReference type="NCBI Taxonomy" id="9527"/>
</organismHost>